<sequence>MPQSLPFSPAWLAFEEAVRGASHRGDHLRIIEGGGLSVDLTAQAYSPQLEAAGLALCEQQGFALARRQLFEGGEANWTEHRPAWHTALRAALPPPSVAKDILNERERLRRFVDEADARGAYKYVLHLGIGGSDWGPRLVARALRHQGLKREVRFASNVDSHAVADAMHQLDPHETLVIVASKSFTTTEPLANAEVAIHWLQNAGVADPIKQVVAITANVDAALDFGISPQHVFRFWDWVGGRYSLWSAIGLPIALAMGNNTFDELLAGAAAMDEHFLRAPLAANAPVQMALAGLANRSVMGFNSLAIAPYDSRLAHLVPWAQQLEMESLGKVATRDGSPAGVPTGPVVWGMTGTDCQHTFFQWLHQDTTGAPVDFIVCEHADHTYDHHHRLLIANCLAQRAALLRGKSFEDALAETCARVDDPSEARILAEHLVHPGRRPSTLIVLPRMTAHNLGALLALYEHKVFTQGVLWGINPFDQWGVEFGKALARGIIGELDKPSGMASADPSTRYWVDLLSRRS</sequence>
<feature type="chain" id="PRO_0000252610" description="Glucose-6-phosphate isomerase">
    <location>
        <begin position="1"/>
        <end position="520"/>
    </location>
</feature>
<feature type="active site" description="Proton donor" evidence="1">
    <location>
        <position position="327"/>
    </location>
</feature>
<feature type="active site" evidence="1">
    <location>
        <position position="358"/>
    </location>
</feature>
<feature type="active site" evidence="1">
    <location>
        <position position="486"/>
    </location>
</feature>
<name>G6PI_BORA1</name>
<comment type="function">
    <text evidence="1">Catalyzes the reversible isomerization of glucose-6-phosphate to fructose-6-phosphate.</text>
</comment>
<comment type="catalytic activity">
    <reaction evidence="1">
        <text>alpha-D-glucose 6-phosphate = beta-D-fructose 6-phosphate</text>
        <dbReference type="Rhea" id="RHEA:11816"/>
        <dbReference type="ChEBI" id="CHEBI:57634"/>
        <dbReference type="ChEBI" id="CHEBI:58225"/>
        <dbReference type="EC" id="5.3.1.9"/>
    </reaction>
</comment>
<comment type="pathway">
    <text evidence="1">Carbohydrate biosynthesis; gluconeogenesis.</text>
</comment>
<comment type="pathway">
    <text evidence="1">Carbohydrate degradation; glycolysis; D-glyceraldehyde 3-phosphate and glycerone phosphate from D-glucose: step 2/4.</text>
</comment>
<comment type="subcellular location">
    <subcellularLocation>
        <location evidence="1">Cytoplasm</location>
    </subcellularLocation>
</comment>
<comment type="similarity">
    <text evidence="1">Belongs to the GPI family.</text>
</comment>
<gene>
    <name evidence="1" type="primary">pgi</name>
    <name type="ordered locus">BAV0519</name>
</gene>
<evidence type="ECO:0000255" key="1">
    <source>
        <dbReference type="HAMAP-Rule" id="MF_00473"/>
    </source>
</evidence>
<reference key="1">
    <citation type="journal article" date="2006" name="J. Bacteriol.">
        <title>Comparison of the genome sequence of the poultry pathogen Bordetella avium with those of B. bronchiseptica, B. pertussis, and B. parapertussis reveals extensive diversity in surface structures associated with host interaction.</title>
        <authorList>
            <person name="Sebaihia M."/>
            <person name="Preston A."/>
            <person name="Maskell D.J."/>
            <person name="Kuzmiak H."/>
            <person name="Connell T.D."/>
            <person name="King N.D."/>
            <person name="Orndorff P.E."/>
            <person name="Miyamoto D.M."/>
            <person name="Thomson N.R."/>
            <person name="Harris D."/>
            <person name="Goble A."/>
            <person name="Lord A."/>
            <person name="Murphy L."/>
            <person name="Quail M.A."/>
            <person name="Rutter S."/>
            <person name="Squares R."/>
            <person name="Squares S."/>
            <person name="Woodward J."/>
            <person name="Parkhill J."/>
            <person name="Temple L.M."/>
        </authorList>
    </citation>
    <scope>NUCLEOTIDE SEQUENCE [LARGE SCALE GENOMIC DNA]</scope>
    <source>
        <strain>197N</strain>
    </source>
</reference>
<dbReference type="EC" id="5.3.1.9" evidence="1"/>
<dbReference type="EMBL" id="AM167904">
    <property type="protein sequence ID" value="CAJ48124.1"/>
    <property type="molecule type" value="Genomic_DNA"/>
</dbReference>
<dbReference type="RefSeq" id="WP_012416215.1">
    <property type="nucleotide sequence ID" value="NC_010645.1"/>
</dbReference>
<dbReference type="SMR" id="Q2KYE9"/>
<dbReference type="STRING" id="360910.BAV0519"/>
<dbReference type="KEGG" id="bav:BAV0519"/>
<dbReference type="eggNOG" id="COG0166">
    <property type="taxonomic scope" value="Bacteria"/>
</dbReference>
<dbReference type="HOGENOM" id="CLU_017947_3_1_4"/>
<dbReference type="OrthoDB" id="140919at2"/>
<dbReference type="UniPathway" id="UPA00109">
    <property type="reaction ID" value="UER00181"/>
</dbReference>
<dbReference type="UniPathway" id="UPA00138"/>
<dbReference type="Proteomes" id="UP000001977">
    <property type="component" value="Chromosome"/>
</dbReference>
<dbReference type="GO" id="GO:0005829">
    <property type="term" value="C:cytosol"/>
    <property type="evidence" value="ECO:0007669"/>
    <property type="project" value="TreeGrafter"/>
</dbReference>
<dbReference type="GO" id="GO:0097367">
    <property type="term" value="F:carbohydrate derivative binding"/>
    <property type="evidence" value="ECO:0007669"/>
    <property type="project" value="InterPro"/>
</dbReference>
<dbReference type="GO" id="GO:0004347">
    <property type="term" value="F:glucose-6-phosphate isomerase activity"/>
    <property type="evidence" value="ECO:0007669"/>
    <property type="project" value="UniProtKB-UniRule"/>
</dbReference>
<dbReference type="GO" id="GO:0048029">
    <property type="term" value="F:monosaccharide binding"/>
    <property type="evidence" value="ECO:0007669"/>
    <property type="project" value="TreeGrafter"/>
</dbReference>
<dbReference type="GO" id="GO:0006094">
    <property type="term" value="P:gluconeogenesis"/>
    <property type="evidence" value="ECO:0007669"/>
    <property type="project" value="UniProtKB-UniRule"/>
</dbReference>
<dbReference type="GO" id="GO:0051156">
    <property type="term" value="P:glucose 6-phosphate metabolic process"/>
    <property type="evidence" value="ECO:0007669"/>
    <property type="project" value="TreeGrafter"/>
</dbReference>
<dbReference type="GO" id="GO:0006096">
    <property type="term" value="P:glycolytic process"/>
    <property type="evidence" value="ECO:0007669"/>
    <property type="project" value="UniProtKB-UniRule"/>
</dbReference>
<dbReference type="CDD" id="cd05015">
    <property type="entry name" value="SIS_PGI_1"/>
    <property type="match status" value="1"/>
</dbReference>
<dbReference type="CDD" id="cd05016">
    <property type="entry name" value="SIS_PGI_2"/>
    <property type="match status" value="1"/>
</dbReference>
<dbReference type="Gene3D" id="1.10.1390.10">
    <property type="match status" value="1"/>
</dbReference>
<dbReference type="Gene3D" id="3.40.50.10490">
    <property type="entry name" value="Glucose-6-phosphate isomerase like protein, domain 1"/>
    <property type="match status" value="2"/>
</dbReference>
<dbReference type="HAMAP" id="MF_00473">
    <property type="entry name" value="G6P_isomerase"/>
    <property type="match status" value="1"/>
</dbReference>
<dbReference type="InterPro" id="IPR001672">
    <property type="entry name" value="G6P_Isomerase"/>
</dbReference>
<dbReference type="InterPro" id="IPR023096">
    <property type="entry name" value="G6P_Isomerase_C"/>
</dbReference>
<dbReference type="InterPro" id="IPR018189">
    <property type="entry name" value="Phosphoglucose_isomerase_CS"/>
</dbReference>
<dbReference type="InterPro" id="IPR046348">
    <property type="entry name" value="SIS_dom_sf"/>
</dbReference>
<dbReference type="InterPro" id="IPR035476">
    <property type="entry name" value="SIS_PGI_1"/>
</dbReference>
<dbReference type="InterPro" id="IPR035482">
    <property type="entry name" value="SIS_PGI_2"/>
</dbReference>
<dbReference type="NCBIfam" id="NF001211">
    <property type="entry name" value="PRK00179.1"/>
    <property type="match status" value="1"/>
</dbReference>
<dbReference type="PANTHER" id="PTHR11469">
    <property type="entry name" value="GLUCOSE-6-PHOSPHATE ISOMERASE"/>
    <property type="match status" value="1"/>
</dbReference>
<dbReference type="PANTHER" id="PTHR11469:SF1">
    <property type="entry name" value="GLUCOSE-6-PHOSPHATE ISOMERASE"/>
    <property type="match status" value="1"/>
</dbReference>
<dbReference type="Pfam" id="PF00342">
    <property type="entry name" value="PGI"/>
    <property type="match status" value="1"/>
</dbReference>
<dbReference type="PRINTS" id="PR00662">
    <property type="entry name" value="G6PISOMERASE"/>
</dbReference>
<dbReference type="SUPFAM" id="SSF53697">
    <property type="entry name" value="SIS domain"/>
    <property type="match status" value="1"/>
</dbReference>
<dbReference type="PROSITE" id="PS00765">
    <property type="entry name" value="P_GLUCOSE_ISOMERASE_1"/>
    <property type="match status" value="1"/>
</dbReference>
<dbReference type="PROSITE" id="PS00174">
    <property type="entry name" value="P_GLUCOSE_ISOMERASE_2"/>
    <property type="match status" value="1"/>
</dbReference>
<dbReference type="PROSITE" id="PS51463">
    <property type="entry name" value="P_GLUCOSE_ISOMERASE_3"/>
    <property type="match status" value="1"/>
</dbReference>
<accession>Q2KYE9</accession>
<proteinExistence type="inferred from homology"/>
<protein>
    <recommendedName>
        <fullName evidence="1">Glucose-6-phosphate isomerase</fullName>
        <shortName evidence="1">GPI</shortName>
        <ecNumber evidence="1">5.3.1.9</ecNumber>
    </recommendedName>
    <alternativeName>
        <fullName evidence="1">Phosphoglucose isomerase</fullName>
        <shortName evidence="1">PGI</shortName>
    </alternativeName>
    <alternativeName>
        <fullName evidence="1">Phosphohexose isomerase</fullName>
        <shortName evidence="1">PHI</shortName>
    </alternativeName>
</protein>
<keyword id="KW-0963">Cytoplasm</keyword>
<keyword id="KW-0312">Gluconeogenesis</keyword>
<keyword id="KW-0324">Glycolysis</keyword>
<keyword id="KW-0413">Isomerase</keyword>
<keyword id="KW-1185">Reference proteome</keyword>
<organism>
    <name type="scientific">Bordetella avium (strain 197N)</name>
    <dbReference type="NCBI Taxonomy" id="360910"/>
    <lineage>
        <taxon>Bacteria</taxon>
        <taxon>Pseudomonadati</taxon>
        <taxon>Pseudomonadota</taxon>
        <taxon>Betaproteobacteria</taxon>
        <taxon>Burkholderiales</taxon>
        <taxon>Alcaligenaceae</taxon>
        <taxon>Bordetella</taxon>
    </lineage>
</organism>